<dbReference type="EC" id="5.1.3.1" evidence="1"/>
<dbReference type="EMBL" id="AE016826">
    <property type="protein sequence ID" value="AAO27185.1"/>
    <property type="molecule type" value="Genomic_DNA"/>
</dbReference>
<dbReference type="RefSeq" id="WP_011091586.1">
    <property type="nucleotide sequence ID" value="NC_004545.1"/>
</dbReference>
<dbReference type="SMR" id="Q89A59"/>
<dbReference type="STRING" id="224915.bbp_479"/>
<dbReference type="KEGG" id="bab:bbp_479"/>
<dbReference type="eggNOG" id="COG0036">
    <property type="taxonomic scope" value="Bacteria"/>
</dbReference>
<dbReference type="HOGENOM" id="CLU_054856_1_0_6"/>
<dbReference type="OrthoDB" id="1645589at2"/>
<dbReference type="Proteomes" id="UP000000601">
    <property type="component" value="Chromosome"/>
</dbReference>
<dbReference type="GO" id="GO:0004750">
    <property type="term" value="F:D-ribulose-phosphate 3-epimerase activity"/>
    <property type="evidence" value="ECO:0007669"/>
    <property type="project" value="UniProtKB-UniRule"/>
</dbReference>
<dbReference type="GO" id="GO:0046872">
    <property type="term" value="F:metal ion binding"/>
    <property type="evidence" value="ECO:0007669"/>
    <property type="project" value="UniProtKB-UniRule"/>
</dbReference>
<dbReference type="GO" id="GO:0019323">
    <property type="term" value="P:pentose catabolic process"/>
    <property type="evidence" value="ECO:0007669"/>
    <property type="project" value="UniProtKB-UniRule"/>
</dbReference>
<dbReference type="GO" id="GO:0006098">
    <property type="term" value="P:pentose-phosphate shunt"/>
    <property type="evidence" value="ECO:0007669"/>
    <property type="project" value="InterPro"/>
</dbReference>
<dbReference type="CDD" id="cd00429">
    <property type="entry name" value="RPE"/>
    <property type="match status" value="1"/>
</dbReference>
<dbReference type="FunFam" id="3.20.20.70:FF:000004">
    <property type="entry name" value="Ribulose-phosphate 3-epimerase"/>
    <property type="match status" value="1"/>
</dbReference>
<dbReference type="Gene3D" id="3.20.20.70">
    <property type="entry name" value="Aldolase class I"/>
    <property type="match status" value="1"/>
</dbReference>
<dbReference type="HAMAP" id="MF_02227">
    <property type="entry name" value="RPE"/>
    <property type="match status" value="1"/>
</dbReference>
<dbReference type="InterPro" id="IPR013785">
    <property type="entry name" value="Aldolase_TIM"/>
</dbReference>
<dbReference type="InterPro" id="IPR026019">
    <property type="entry name" value="Ribul_P_3_epim"/>
</dbReference>
<dbReference type="InterPro" id="IPR000056">
    <property type="entry name" value="Ribul_P_3_epim-like"/>
</dbReference>
<dbReference type="InterPro" id="IPR011060">
    <property type="entry name" value="RibuloseP-bd_barrel"/>
</dbReference>
<dbReference type="NCBIfam" id="NF004076">
    <property type="entry name" value="PRK05581.1-4"/>
    <property type="match status" value="1"/>
</dbReference>
<dbReference type="NCBIfam" id="TIGR01163">
    <property type="entry name" value="rpe"/>
    <property type="match status" value="1"/>
</dbReference>
<dbReference type="PANTHER" id="PTHR11749">
    <property type="entry name" value="RIBULOSE-5-PHOSPHATE-3-EPIMERASE"/>
    <property type="match status" value="1"/>
</dbReference>
<dbReference type="Pfam" id="PF00834">
    <property type="entry name" value="Ribul_P_3_epim"/>
    <property type="match status" value="1"/>
</dbReference>
<dbReference type="PIRSF" id="PIRSF001461">
    <property type="entry name" value="RPE"/>
    <property type="match status" value="1"/>
</dbReference>
<dbReference type="SUPFAM" id="SSF51366">
    <property type="entry name" value="Ribulose-phoshate binding barrel"/>
    <property type="match status" value="1"/>
</dbReference>
<dbReference type="PROSITE" id="PS01085">
    <property type="entry name" value="RIBUL_P_3_EPIMER_1"/>
    <property type="match status" value="1"/>
</dbReference>
<dbReference type="PROSITE" id="PS01086">
    <property type="entry name" value="RIBUL_P_3_EPIMER_2"/>
    <property type="match status" value="1"/>
</dbReference>
<keyword id="KW-0119">Carbohydrate metabolism</keyword>
<keyword id="KW-0413">Isomerase</keyword>
<keyword id="KW-0479">Metal-binding</keyword>
<keyword id="KW-1185">Reference proteome</keyword>
<organism>
    <name type="scientific">Buchnera aphidicola subsp. Baizongia pistaciae (strain Bp)</name>
    <dbReference type="NCBI Taxonomy" id="224915"/>
    <lineage>
        <taxon>Bacteria</taxon>
        <taxon>Pseudomonadati</taxon>
        <taxon>Pseudomonadota</taxon>
        <taxon>Gammaproteobacteria</taxon>
        <taxon>Enterobacterales</taxon>
        <taxon>Erwiniaceae</taxon>
        <taxon>Buchnera</taxon>
    </lineage>
</organism>
<feature type="chain" id="PRO_0000171564" description="Ribulose-phosphate 3-epimerase">
    <location>
        <begin position="1"/>
        <end position="228"/>
    </location>
</feature>
<feature type="active site" description="Proton acceptor" evidence="1">
    <location>
        <position position="36"/>
    </location>
</feature>
<feature type="active site" description="Proton donor" evidence="1">
    <location>
        <position position="179"/>
    </location>
</feature>
<feature type="binding site" evidence="1">
    <location>
        <position position="9"/>
    </location>
    <ligand>
        <name>substrate</name>
    </ligand>
</feature>
<feature type="binding site" evidence="1">
    <location>
        <position position="34"/>
    </location>
    <ligand>
        <name>a divalent metal cation</name>
        <dbReference type="ChEBI" id="CHEBI:60240"/>
    </ligand>
</feature>
<feature type="binding site" evidence="1">
    <location>
        <position position="36"/>
    </location>
    <ligand>
        <name>a divalent metal cation</name>
        <dbReference type="ChEBI" id="CHEBI:60240"/>
    </ligand>
</feature>
<feature type="binding site" evidence="1">
    <location>
        <position position="70"/>
    </location>
    <ligand>
        <name>a divalent metal cation</name>
        <dbReference type="ChEBI" id="CHEBI:60240"/>
    </ligand>
</feature>
<feature type="binding site" evidence="1">
    <location>
        <position position="70"/>
    </location>
    <ligand>
        <name>substrate</name>
    </ligand>
</feature>
<feature type="binding site" evidence="1">
    <location>
        <begin position="146"/>
        <end position="149"/>
    </location>
    <ligand>
        <name>substrate</name>
    </ligand>
</feature>
<feature type="binding site" evidence="1">
    <location>
        <begin position="179"/>
        <end position="181"/>
    </location>
    <ligand>
        <name>substrate</name>
    </ligand>
</feature>
<feature type="binding site" evidence="1">
    <location>
        <position position="179"/>
    </location>
    <ligand>
        <name>a divalent metal cation</name>
        <dbReference type="ChEBI" id="CHEBI:60240"/>
    </ligand>
</feature>
<feature type="binding site" evidence="1">
    <location>
        <begin position="201"/>
        <end position="202"/>
    </location>
    <ligand>
        <name>substrate</name>
    </ligand>
</feature>
<reference key="1">
    <citation type="journal article" date="2003" name="Proc. Natl. Acad. Sci. U.S.A.">
        <title>Reductive genome evolution in Buchnera aphidicola.</title>
        <authorList>
            <person name="van Ham R.C.H.J."/>
            <person name="Kamerbeek J."/>
            <person name="Palacios C."/>
            <person name="Rausell C."/>
            <person name="Abascal F."/>
            <person name="Bastolla U."/>
            <person name="Fernandez J.M."/>
            <person name="Jimenez L."/>
            <person name="Postigo M."/>
            <person name="Silva F.J."/>
            <person name="Tamames J."/>
            <person name="Viguera E."/>
            <person name="Latorre A."/>
            <person name="Valencia A."/>
            <person name="Moran F."/>
            <person name="Moya A."/>
        </authorList>
    </citation>
    <scope>NUCLEOTIDE SEQUENCE [LARGE SCALE GENOMIC DNA]</scope>
    <source>
        <strain>Bp</strain>
    </source>
</reference>
<sequence>MKKFLLSSSVLSANFSRLGEDIFDVLKSGSDMIHYDVMDNHYVKNLTFGPIVLESLRSVEKIKSMVIDVHLMTCPVDDLIIKFAKLDVNIISFHPESTNNVEKTIKLIKSYGCKVGLALNPLTPLCVLDNVLDKIDLILLMSVNPGFPGQKFIPSILNKIRIVRELIDKSKKNILLEVDGGINLSNIFKIASFGTDIFVIGSAIFNSINYDLTIRSFRDVLKNINCKK</sequence>
<proteinExistence type="inferred from homology"/>
<gene>
    <name evidence="1" type="primary">rpe</name>
    <name type="ordered locus">bbp_479</name>
</gene>
<comment type="function">
    <text evidence="1">Catalyzes the reversible epimerization of D-ribulose 5-phosphate to D-xylulose 5-phosphate.</text>
</comment>
<comment type="catalytic activity">
    <reaction evidence="1">
        <text>D-ribulose 5-phosphate = D-xylulose 5-phosphate</text>
        <dbReference type="Rhea" id="RHEA:13677"/>
        <dbReference type="ChEBI" id="CHEBI:57737"/>
        <dbReference type="ChEBI" id="CHEBI:58121"/>
        <dbReference type="EC" id="5.1.3.1"/>
    </reaction>
</comment>
<comment type="cofactor">
    <cofactor evidence="1">
        <name>a divalent metal cation</name>
        <dbReference type="ChEBI" id="CHEBI:60240"/>
    </cofactor>
    <text evidence="1">Binds 1 divalent metal cation per subunit.</text>
</comment>
<comment type="pathway">
    <text evidence="1">Carbohydrate degradation.</text>
</comment>
<comment type="similarity">
    <text evidence="1">Belongs to the ribulose-phosphate 3-epimerase family.</text>
</comment>
<accession>Q89A59</accession>
<protein>
    <recommendedName>
        <fullName evidence="1">Ribulose-phosphate 3-epimerase</fullName>
        <ecNumber evidence="1">5.1.3.1</ecNumber>
    </recommendedName>
</protein>
<evidence type="ECO:0000255" key="1">
    <source>
        <dbReference type="HAMAP-Rule" id="MF_02227"/>
    </source>
</evidence>
<name>RPE_BUCBP</name>